<keyword id="KW-0002">3D-structure</keyword>
<keyword id="KW-0963">Cytoplasm</keyword>
<keyword id="KW-0539">Nucleus</keyword>
<keyword id="KW-1185">Reference proteome</keyword>
<keyword id="KW-0690">Ribosome biogenesis</keyword>
<proteinExistence type="evidence at protein level"/>
<protein>
    <recommendedName>
        <fullName>Ribosome biogenesis protein brx1</fullName>
    </recommendedName>
</protein>
<feature type="chain" id="PRO_0000120234" description="Ribosome biogenesis protein brx1">
    <location>
        <begin position="1"/>
        <end position="295"/>
    </location>
</feature>
<feature type="domain" description="Brix" evidence="2">
    <location>
        <begin position="43"/>
        <end position="238"/>
    </location>
</feature>
<feature type="region of interest" description="Disordered" evidence="3">
    <location>
        <begin position="1"/>
        <end position="22"/>
    </location>
</feature>
<feature type="strand" evidence="6">
    <location>
        <begin position="45"/>
        <end position="50"/>
    </location>
</feature>
<feature type="helix" evidence="6">
    <location>
        <begin position="55"/>
        <end position="66"/>
    </location>
</feature>
<feature type="strand" evidence="6">
    <location>
        <begin position="71"/>
        <end position="78"/>
    </location>
</feature>
<feature type="helix" evidence="6">
    <location>
        <begin position="85"/>
        <end position="93"/>
    </location>
</feature>
<feature type="strand" evidence="6">
    <location>
        <begin position="96"/>
        <end position="104"/>
    </location>
</feature>
<feature type="turn" evidence="6">
    <location>
        <begin position="105"/>
        <end position="107"/>
    </location>
</feature>
<feature type="strand" evidence="6">
    <location>
        <begin position="108"/>
        <end position="118"/>
    </location>
</feature>
<feature type="strand" evidence="6">
    <location>
        <begin position="122"/>
        <end position="130"/>
    </location>
</feature>
<feature type="strand" evidence="6">
    <location>
        <begin position="134"/>
        <end position="136"/>
    </location>
</feature>
<feature type="strand" evidence="6">
    <location>
        <begin position="148"/>
        <end position="151"/>
    </location>
</feature>
<feature type="helix" evidence="6">
    <location>
        <begin position="153"/>
        <end position="156"/>
    </location>
</feature>
<feature type="helix" evidence="6">
    <location>
        <begin position="159"/>
        <end position="172"/>
    </location>
</feature>
<feature type="strand" evidence="6">
    <location>
        <begin position="182"/>
        <end position="184"/>
    </location>
</feature>
<feature type="strand" evidence="6">
    <location>
        <begin position="188"/>
        <end position="194"/>
    </location>
</feature>
<feature type="strand" evidence="6">
    <location>
        <begin position="197"/>
        <end position="204"/>
    </location>
</feature>
<feature type="strand" evidence="6">
    <location>
        <begin position="219"/>
        <end position="235"/>
    </location>
</feature>
<feature type="strand" evidence="6">
    <location>
        <begin position="238"/>
        <end position="244"/>
    </location>
</feature>
<feature type="helix" evidence="6">
    <location>
        <begin position="251"/>
        <end position="282"/>
    </location>
</feature>
<feature type="turn" evidence="6">
    <location>
        <begin position="289"/>
        <end position="292"/>
    </location>
</feature>
<name>BRX1_SCHPO</name>
<sequence>MSTVYKLKTSERAPKNEDEDEEYVPVQNGQGNKHSAGFVPIKQKVLVLSSRGVTYRQRHLLNDLVSMMPHSKKDSKLDSKDRLYQLNELAELYNCNNIFFFESRRREDLYLHIARAPNGPTVKFHVENLHTMDELNMTGNALKGSRPILSFDKTFDTAPHLKVVKELLQQTFGIPKGARRSKPFIDRVCTLTIADGKIWFRNYEIRENEDKSKDPVTLIEIGPRFVMTIINILEGSFGGPVIYKNDTFVSSTMVRAAIRNQAAQRYVNRQESKLERQVRAQQNVIPEDPLDNVFA</sequence>
<gene>
    <name type="primary">brx1</name>
    <name type="ORF">SPBC800.06</name>
</gene>
<comment type="function">
    <text evidence="1">Required for biogenesis of the 60S ribosomal subunit.</text>
</comment>
<comment type="subcellular location">
    <subcellularLocation>
        <location evidence="4">Nucleus</location>
        <location evidence="4">Nucleolus</location>
    </subcellularLocation>
    <subcellularLocation>
        <location evidence="4">Cytoplasm</location>
    </subcellularLocation>
</comment>
<comment type="similarity">
    <text evidence="5">Belongs to the BRX1 family.</text>
</comment>
<organism>
    <name type="scientific">Schizosaccharomyces pombe (strain 972 / ATCC 24843)</name>
    <name type="common">Fission yeast</name>
    <dbReference type="NCBI Taxonomy" id="284812"/>
    <lineage>
        <taxon>Eukaryota</taxon>
        <taxon>Fungi</taxon>
        <taxon>Dikarya</taxon>
        <taxon>Ascomycota</taxon>
        <taxon>Taphrinomycotina</taxon>
        <taxon>Schizosaccharomycetes</taxon>
        <taxon>Schizosaccharomycetales</taxon>
        <taxon>Schizosaccharomycetaceae</taxon>
        <taxon>Schizosaccharomyces</taxon>
    </lineage>
</organism>
<dbReference type="EMBL" id="CU329671">
    <property type="protein sequence ID" value="CAC01521.1"/>
    <property type="molecule type" value="Genomic_DNA"/>
</dbReference>
<dbReference type="RefSeq" id="NP_595107.1">
    <property type="nucleotide sequence ID" value="NM_001021014.2"/>
</dbReference>
<dbReference type="PDB" id="8ESQ">
    <property type="method" value="EM"/>
    <property type="resolution" value="2.80 A"/>
    <property type="chains" value="A=1-295"/>
</dbReference>
<dbReference type="PDB" id="8ESR">
    <property type="method" value="EM"/>
    <property type="resolution" value="3.20 A"/>
    <property type="chains" value="A=1-295"/>
</dbReference>
<dbReference type="PDB" id="8ETG">
    <property type="method" value="EM"/>
    <property type="resolution" value="3.40 A"/>
    <property type="chains" value="A=1-295"/>
</dbReference>
<dbReference type="PDB" id="8ETH">
    <property type="method" value="EM"/>
    <property type="resolution" value="3.80 A"/>
    <property type="chains" value="A=1-295"/>
</dbReference>
<dbReference type="PDB" id="8ETI">
    <property type="method" value="EM"/>
    <property type="resolution" value="3.70 A"/>
    <property type="chains" value="A=1-295"/>
</dbReference>
<dbReference type="PDB" id="8EUP">
    <property type="method" value="EM"/>
    <property type="resolution" value="3.10 A"/>
    <property type="chains" value="A=1-295"/>
</dbReference>
<dbReference type="PDB" id="8EUY">
    <property type="method" value="EM"/>
    <property type="resolution" value="3.00 A"/>
    <property type="chains" value="A=1-295"/>
</dbReference>
<dbReference type="PDB" id="8EV3">
    <property type="method" value="EM"/>
    <property type="resolution" value="3.00 A"/>
    <property type="chains" value="A=1-295"/>
</dbReference>
<dbReference type="PDBsum" id="8ESQ"/>
<dbReference type="PDBsum" id="8ESR"/>
<dbReference type="PDBsum" id="8ETG"/>
<dbReference type="PDBsum" id="8ETH"/>
<dbReference type="PDBsum" id="8ETI"/>
<dbReference type="PDBsum" id="8EUP"/>
<dbReference type="PDBsum" id="8EUY"/>
<dbReference type="PDBsum" id="8EV3"/>
<dbReference type="SMR" id="Q9HGL6"/>
<dbReference type="BioGRID" id="276799">
    <property type="interactions" value="11"/>
</dbReference>
<dbReference type="FunCoup" id="Q9HGL6">
    <property type="interactions" value="702"/>
</dbReference>
<dbReference type="STRING" id="284812.Q9HGL6"/>
<dbReference type="iPTMnet" id="Q9HGL6"/>
<dbReference type="PaxDb" id="4896-SPBC800.06.1"/>
<dbReference type="EnsemblFungi" id="SPBC800.06.1">
    <property type="protein sequence ID" value="SPBC800.06.1:pep"/>
    <property type="gene ID" value="SPBC800.06"/>
</dbReference>
<dbReference type="GeneID" id="2540268"/>
<dbReference type="KEGG" id="spo:2540268"/>
<dbReference type="PomBase" id="SPBC800.06">
    <property type="gene designation" value="brx1"/>
</dbReference>
<dbReference type="VEuPathDB" id="FungiDB:SPBC800.06"/>
<dbReference type="eggNOG" id="KOG2971">
    <property type="taxonomic scope" value="Eukaryota"/>
</dbReference>
<dbReference type="HOGENOM" id="CLU_048373_2_1_1"/>
<dbReference type="InParanoid" id="Q9HGL6"/>
<dbReference type="OMA" id="YRHRHLM"/>
<dbReference type="PhylomeDB" id="Q9HGL6"/>
<dbReference type="PRO" id="PR:Q9HGL6"/>
<dbReference type="Proteomes" id="UP000002485">
    <property type="component" value="Chromosome II"/>
</dbReference>
<dbReference type="GO" id="GO:0032153">
    <property type="term" value="C:cell division site"/>
    <property type="evidence" value="ECO:0007005"/>
    <property type="project" value="PomBase"/>
</dbReference>
<dbReference type="GO" id="GO:0005829">
    <property type="term" value="C:cytosol"/>
    <property type="evidence" value="ECO:0007005"/>
    <property type="project" value="PomBase"/>
</dbReference>
<dbReference type="GO" id="GO:0005730">
    <property type="term" value="C:nucleolus"/>
    <property type="evidence" value="ECO:0007005"/>
    <property type="project" value="PomBase"/>
</dbReference>
<dbReference type="GO" id="GO:0005634">
    <property type="term" value="C:nucleus"/>
    <property type="evidence" value="ECO:0007005"/>
    <property type="project" value="PomBase"/>
</dbReference>
<dbReference type="GO" id="GO:0030684">
    <property type="term" value="C:preribosome"/>
    <property type="evidence" value="ECO:0000314"/>
    <property type="project" value="PomBase"/>
</dbReference>
<dbReference type="GO" id="GO:0003723">
    <property type="term" value="F:RNA binding"/>
    <property type="evidence" value="ECO:0000318"/>
    <property type="project" value="GO_Central"/>
</dbReference>
<dbReference type="GO" id="GO:0019843">
    <property type="term" value="F:rRNA binding"/>
    <property type="evidence" value="ECO:0007669"/>
    <property type="project" value="InterPro"/>
</dbReference>
<dbReference type="GO" id="GO:1902626">
    <property type="term" value="P:assembly of large subunit precursor of preribosome"/>
    <property type="evidence" value="ECO:0000269"/>
    <property type="project" value="PomBase"/>
</dbReference>
<dbReference type="GO" id="GO:0000027">
    <property type="term" value="P:ribosomal large subunit assembly"/>
    <property type="evidence" value="ECO:0000318"/>
    <property type="project" value="GO_Central"/>
</dbReference>
<dbReference type="GO" id="GO:0006364">
    <property type="term" value="P:rRNA processing"/>
    <property type="evidence" value="ECO:0000266"/>
    <property type="project" value="PomBase"/>
</dbReference>
<dbReference type="FunFam" id="3.40.50.10480:FF:000009">
    <property type="entry name" value="Ribosome biogenesis protein, putative"/>
    <property type="match status" value="1"/>
</dbReference>
<dbReference type="Gene3D" id="3.40.50.10480">
    <property type="entry name" value="Probable brix-domain ribosomal biogenesis protein"/>
    <property type="match status" value="1"/>
</dbReference>
<dbReference type="InterPro" id="IPR007109">
    <property type="entry name" value="Brix"/>
</dbReference>
<dbReference type="InterPro" id="IPR026532">
    <property type="entry name" value="BRX1"/>
</dbReference>
<dbReference type="PANTHER" id="PTHR13634">
    <property type="entry name" value="RIBOSOME BIOGENESIS PROTEIN BRIX"/>
    <property type="match status" value="1"/>
</dbReference>
<dbReference type="PANTHER" id="PTHR13634:SF0">
    <property type="entry name" value="RIBOSOME BIOGENESIS PROTEIN BRX1 HOMOLOG"/>
    <property type="match status" value="1"/>
</dbReference>
<dbReference type="Pfam" id="PF04427">
    <property type="entry name" value="Brix"/>
    <property type="match status" value="1"/>
</dbReference>
<dbReference type="SMART" id="SM00879">
    <property type="entry name" value="Brix"/>
    <property type="match status" value="1"/>
</dbReference>
<dbReference type="SUPFAM" id="SSF52954">
    <property type="entry name" value="Class II aaRS ABD-related"/>
    <property type="match status" value="1"/>
</dbReference>
<dbReference type="PROSITE" id="PS50833">
    <property type="entry name" value="BRIX"/>
    <property type="match status" value="1"/>
</dbReference>
<evidence type="ECO:0000250" key="1"/>
<evidence type="ECO:0000255" key="2">
    <source>
        <dbReference type="PROSITE-ProRule" id="PRU00034"/>
    </source>
</evidence>
<evidence type="ECO:0000256" key="3">
    <source>
        <dbReference type="SAM" id="MobiDB-lite"/>
    </source>
</evidence>
<evidence type="ECO:0000269" key="4">
    <source>
    </source>
</evidence>
<evidence type="ECO:0000305" key="5"/>
<evidence type="ECO:0007829" key="6">
    <source>
        <dbReference type="PDB" id="8EUY"/>
    </source>
</evidence>
<reference key="1">
    <citation type="journal article" date="2002" name="Nature">
        <title>The genome sequence of Schizosaccharomyces pombe.</title>
        <authorList>
            <person name="Wood V."/>
            <person name="Gwilliam R."/>
            <person name="Rajandream M.A."/>
            <person name="Lyne M.H."/>
            <person name="Lyne R."/>
            <person name="Stewart A."/>
            <person name="Sgouros J.G."/>
            <person name="Peat N."/>
            <person name="Hayles J."/>
            <person name="Baker S.G."/>
            <person name="Basham D."/>
            <person name="Bowman S."/>
            <person name="Brooks K."/>
            <person name="Brown D."/>
            <person name="Brown S."/>
            <person name="Chillingworth T."/>
            <person name="Churcher C.M."/>
            <person name="Collins M."/>
            <person name="Connor R."/>
            <person name="Cronin A."/>
            <person name="Davis P."/>
            <person name="Feltwell T."/>
            <person name="Fraser A."/>
            <person name="Gentles S."/>
            <person name="Goble A."/>
            <person name="Hamlin N."/>
            <person name="Harris D.E."/>
            <person name="Hidalgo J."/>
            <person name="Hodgson G."/>
            <person name="Holroyd S."/>
            <person name="Hornsby T."/>
            <person name="Howarth S."/>
            <person name="Huckle E.J."/>
            <person name="Hunt S."/>
            <person name="Jagels K."/>
            <person name="James K.D."/>
            <person name="Jones L."/>
            <person name="Jones M."/>
            <person name="Leather S."/>
            <person name="McDonald S."/>
            <person name="McLean J."/>
            <person name="Mooney P."/>
            <person name="Moule S."/>
            <person name="Mungall K.L."/>
            <person name="Murphy L.D."/>
            <person name="Niblett D."/>
            <person name="Odell C."/>
            <person name="Oliver K."/>
            <person name="O'Neil S."/>
            <person name="Pearson D."/>
            <person name="Quail M.A."/>
            <person name="Rabbinowitsch E."/>
            <person name="Rutherford K.M."/>
            <person name="Rutter S."/>
            <person name="Saunders D."/>
            <person name="Seeger K."/>
            <person name="Sharp S."/>
            <person name="Skelton J."/>
            <person name="Simmonds M.N."/>
            <person name="Squares R."/>
            <person name="Squares S."/>
            <person name="Stevens K."/>
            <person name="Taylor K."/>
            <person name="Taylor R.G."/>
            <person name="Tivey A."/>
            <person name="Walsh S.V."/>
            <person name="Warren T."/>
            <person name="Whitehead S."/>
            <person name="Woodward J.R."/>
            <person name="Volckaert G."/>
            <person name="Aert R."/>
            <person name="Robben J."/>
            <person name="Grymonprez B."/>
            <person name="Weltjens I."/>
            <person name="Vanstreels E."/>
            <person name="Rieger M."/>
            <person name="Schaefer M."/>
            <person name="Mueller-Auer S."/>
            <person name="Gabel C."/>
            <person name="Fuchs M."/>
            <person name="Duesterhoeft A."/>
            <person name="Fritzc C."/>
            <person name="Holzer E."/>
            <person name="Moestl D."/>
            <person name="Hilbert H."/>
            <person name="Borzym K."/>
            <person name="Langer I."/>
            <person name="Beck A."/>
            <person name="Lehrach H."/>
            <person name="Reinhardt R."/>
            <person name="Pohl T.M."/>
            <person name="Eger P."/>
            <person name="Zimmermann W."/>
            <person name="Wedler H."/>
            <person name="Wambutt R."/>
            <person name="Purnelle B."/>
            <person name="Goffeau A."/>
            <person name="Cadieu E."/>
            <person name="Dreano S."/>
            <person name="Gloux S."/>
            <person name="Lelaure V."/>
            <person name="Mottier S."/>
            <person name="Galibert F."/>
            <person name="Aves S.J."/>
            <person name="Xiang Z."/>
            <person name="Hunt C."/>
            <person name="Moore K."/>
            <person name="Hurst S.M."/>
            <person name="Lucas M."/>
            <person name="Rochet M."/>
            <person name="Gaillardin C."/>
            <person name="Tallada V.A."/>
            <person name="Garzon A."/>
            <person name="Thode G."/>
            <person name="Daga R.R."/>
            <person name="Cruzado L."/>
            <person name="Jimenez J."/>
            <person name="Sanchez M."/>
            <person name="del Rey F."/>
            <person name="Benito J."/>
            <person name="Dominguez A."/>
            <person name="Revuelta J.L."/>
            <person name="Moreno S."/>
            <person name="Armstrong J."/>
            <person name="Forsburg S.L."/>
            <person name="Cerutti L."/>
            <person name="Lowe T."/>
            <person name="McCombie W.R."/>
            <person name="Paulsen I."/>
            <person name="Potashkin J."/>
            <person name="Shpakovski G.V."/>
            <person name="Ussery D."/>
            <person name="Barrell B.G."/>
            <person name="Nurse P."/>
        </authorList>
    </citation>
    <scope>NUCLEOTIDE SEQUENCE [LARGE SCALE GENOMIC DNA]</scope>
    <source>
        <strain>972 / ATCC 24843</strain>
    </source>
</reference>
<reference key="2">
    <citation type="journal article" date="2006" name="Nat. Biotechnol.">
        <title>ORFeome cloning and global analysis of protein localization in the fission yeast Schizosaccharomyces pombe.</title>
        <authorList>
            <person name="Matsuyama A."/>
            <person name="Arai R."/>
            <person name="Yashiroda Y."/>
            <person name="Shirai A."/>
            <person name="Kamata A."/>
            <person name="Sekido S."/>
            <person name="Kobayashi Y."/>
            <person name="Hashimoto A."/>
            <person name="Hamamoto M."/>
            <person name="Hiraoka Y."/>
            <person name="Horinouchi S."/>
            <person name="Yoshida M."/>
        </authorList>
    </citation>
    <scope>SUBCELLULAR LOCATION [LARGE SCALE ANALYSIS]</scope>
</reference>
<accession>Q9HGL6</accession>